<reference key="1">
    <citation type="submission" date="2007-04" db="EMBL/GenBank/DDBJ databases">
        <title>Complete sequence of chromosome of Mycobacterium gilvum PYR-GCK.</title>
        <authorList>
            <consortium name="US DOE Joint Genome Institute"/>
            <person name="Copeland A."/>
            <person name="Lucas S."/>
            <person name="Lapidus A."/>
            <person name="Barry K."/>
            <person name="Detter J.C."/>
            <person name="Glavina del Rio T."/>
            <person name="Hammon N."/>
            <person name="Israni S."/>
            <person name="Dalin E."/>
            <person name="Tice H."/>
            <person name="Pitluck S."/>
            <person name="Chain P."/>
            <person name="Malfatti S."/>
            <person name="Shin M."/>
            <person name="Vergez L."/>
            <person name="Schmutz J."/>
            <person name="Larimer F."/>
            <person name="Land M."/>
            <person name="Hauser L."/>
            <person name="Kyrpides N."/>
            <person name="Mikhailova N."/>
            <person name="Miller C."/>
            <person name="Richardson P."/>
        </authorList>
    </citation>
    <scope>NUCLEOTIDE SEQUENCE [LARGE SCALE GENOMIC DNA]</scope>
    <source>
        <strain>PYR-GCK</strain>
    </source>
</reference>
<organism>
    <name type="scientific">Mycolicibacterium gilvum (strain PYR-GCK)</name>
    <name type="common">Mycobacterium gilvum (strain PYR-GCK)</name>
    <dbReference type="NCBI Taxonomy" id="350054"/>
    <lineage>
        <taxon>Bacteria</taxon>
        <taxon>Bacillati</taxon>
        <taxon>Actinomycetota</taxon>
        <taxon>Actinomycetes</taxon>
        <taxon>Mycobacteriales</taxon>
        <taxon>Mycobacteriaceae</taxon>
        <taxon>Mycolicibacterium</taxon>
    </lineage>
</organism>
<gene>
    <name evidence="1" type="primary">mqo</name>
    <name type="ordered locus">Mflv_4052</name>
</gene>
<comment type="catalytic activity">
    <reaction evidence="1">
        <text>(S)-malate + a quinone = a quinol + oxaloacetate</text>
        <dbReference type="Rhea" id="RHEA:46012"/>
        <dbReference type="ChEBI" id="CHEBI:15589"/>
        <dbReference type="ChEBI" id="CHEBI:16452"/>
        <dbReference type="ChEBI" id="CHEBI:24646"/>
        <dbReference type="ChEBI" id="CHEBI:132124"/>
        <dbReference type="EC" id="1.1.5.4"/>
    </reaction>
</comment>
<comment type="cofactor">
    <cofactor evidence="1">
        <name>FAD</name>
        <dbReference type="ChEBI" id="CHEBI:57692"/>
    </cofactor>
</comment>
<comment type="pathway">
    <text evidence="1">Carbohydrate metabolism; tricarboxylic acid cycle; oxaloacetate from (S)-malate (quinone route): step 1/1.</text>
</comment>
<comment type="similarity">
    <text evidence="1">Belongs to the MQO family.</text>
</comment>
<accession>A4TCE3</accession>
<evidence type="ECO:0000255" key="1">
    <source>
        <dbReference type="HAMAP-Rule" id="MF_00212"/>
    </source>
</evidence>
<evidence type="ECO:0000256" key="2">
    <source>
        <dbReference type="SAM" id="MobiDB-lite"/>
    </source>
</evidence>
<feature type="chain" id="PRO_1000078033" description="Probable malate:quinone oxidoreductase">
    <location>
        <begin position="1"/>
        <end position="518"/>
    </location>
</feature>
<feature type="region of interest" description="Disordered" evidence="2">
    <location>
        <begin position="495"/>
        <end position="518"/>
    </location>
</feature>
<feature type="compositionally biased region" description="Polar residues" evidence="2">
    <location>
        <begin position="501"/>
        <end position="518"/>
    </location>
</feature>
<name>MQO_MYCGI</name>
<keyword id="KW-0274">FAD</keyword>
<keyword id="KW-0285">Flavoprotein</keyword>
<keyword id="KW-0560">Oxidoreductase</keyword>
<keyword id="KW-0816">Tricarboxylic acid cycle</keyword>
<sequence length="518" mass="55788">MSEAEKTDVLLVGAGIMSATLCALLRLLEPNWSMTLVERLDGAAAESSDPWNNAGTGHSALCELNYTPARPDGSIDIAKAVNVNEQFQVSRQFWTYAVENGVLPDVRSFLNPIPHVSFVTGADNVQYLRKRYEALVGNPLFGTMEFIDDAGEFARRLPLMAEGRDLREPVGLNWTQDGTDVDFGALSRQLLGFGAQQGMDTLFGHDVTNLSQNSDSTWTVKVVNRRTGRKRTFNAKFVFVGAGGGALPLLQKAGIKEAKGFGGFPVGGQWLRTGNPELTAKHQAKVYGLPPLGAPPMSVPHLDTRVINDKSWLLFGPFAGWSPKFLKQGKVTDLPFSVKPDNLVSMLGVGLTEMGLLKYLIGQLLLSEAARVENLREFAPSAKDSDWELDIAGQRVQVIRKAKGKGGVLEFGTTVLSAADGSIAGLLGASPGASTAVPAMFDVMKRCFADRYPSWEPKLKEMVPSLGVTLSDEPKLFEEVWARGTKVLKLDKPAGAIPATTDGQSTAGTEHTPTAATV</sequence>
<protein>
    <recommendedName>
        <fullName evidence="1">Probable malate:quinone oxidoreductase</fullName>
        <ecNumber evidence="1">1.1.5.4</ecNumber>
    </recommendedName>
    <alternativeName>
        <fullName evidence="1">MQO</fullName>
    </alternativeName>
    <alternativeName>
        <fullName evidence="1">Malate dehydrogenase [quinone]</fullName>
    </alternativeName>
</protein>
<dbReference type="EC" id="1.1.5.4" evidence="1"/>
<dbReference type="EMBL" id="CP000656">
    <property type="protein sequence ID" value="ABP46522.1"/>
    <property type="molecule type" value="Genomic_DNA"/>
</dbReference>
<dbReference type="SMR" id="A4TCE3"/>
<dbReference type="STRING" id="350054.Mflv_4052"/>
<dbReference type="KEGG" id="mgi:Mflv_4052"/>
<dbReference type="eggNOG" id="COG0579">
    <property type="taxonomic scope" value="Bacteria"/>
</dbReference>
<dbReference type="HOGENOM" id="CLU_028151_0_0_11"/>
<dbReference type="OrthoDB" id="9763983at2"/>
<dbReference type="UniPathway" id="UPA00223">
    <property type="reaction ID" value="UER01008"/>
</dbReference>
<dbReference type="GO" id="GO:0047545">
    <property type="term" value="F:2-hydroxyglutarate dehydrogenase activity"/>
    <property type="evidence" value="ECO:0007669"/>
    <property type="project" value="TreeGrafter"/>
</dbReference>
<dbReference type="GO" id="GO:0008924">
    <property type="term" value="F:L-malate dehydrogenase (quinone) activity"/>
    <property type="evidence" value="ECO:0007669"/>
    <property type="project" value="UniProtKB-UniRule"/>
</dbReference>
<dbReference type="GO" id="GO:0006099">
    <property type="term" value="P:tricarboxylic acid cycle"/>
    <property type="evidence" value="ECO:0007669"/>
    <property type="project" value="UniProtKB-UniRule"/>
</dbReference>
<dbReference type="Gene3D" id="3.50.50.60">
    <property type="entry name" value="FAD/NAD(P)-binding domain"/>
    <property type="match status" value="1"/>
</dbReference>
<dbReference type="HAMAP" id="MF_00212">
    <property type="entry name" value="MQO"/>
    <property type="match status" value="1"/>
</dbReference>
<dbReference type="InterPro" id="IPR036188">
    <property type="entry name" value="FAD/NAD-bd_sf"/>
</dbReference>
<dbReference type="InterPro" id="IPR006231">
    <property type="entry name" value="MQO"/>
</dbReference>
<dbReference type="NCBIfam" id="TIGR01320">
    <property type="entry name" value="mal_quin_oxido"/>
    <property type="match status" value="1"/>
</dbReference>
<dbReference type="NCBIfam" id="NF003603">
    <property type="entry name" value="PRK05257.1-1"/>
    <property type="match status" value="1"/>
</dbReference>
<dbReference type="NCBIfam" id="NF003605">
    <property type="entry name" value="PRK05257.1-4"/>
    <property type="match status" value="1"/>
</dbReference>
<dbReference type="NCBIfam" id="NF003606">
    <property type="entry name" value="PRK05257.2-1"/>
    <property type="match status" value="1"/>
</dbReference>
<dbReference type="NCBIfam" id="NF003611">
    <property type="entry name" value="PRK05257.3-2"/>
    <property type="match status" value="1"/>
</dbReference>
<dbReference type="NCBIfam" id="NF009875">
    <property type="entry name" value="PRK13339.1"/>
    <property type="match status" value="1"/>
</dbReference>
<dbReference type="PANTHER" id="PTHR43104">
    <property type="entry name" value="L-2-HYDROXYGLUTARATE DEHYDROGENASE, MITOCHONDRIAL"/>
    <property type="match status" value="1"/>
</dbReference>
<dbReference type="PANTHER" id="PTHR43104:SF2">
    <property type="entry name" value="L-2-HYDROXYGLUTARATE DEHYDROGENASE, MITOCHONDRIAL"/>
    <property type="match status" value="1"/>
</dbReference>
<dbReference type="Pfam" id="PF06039">
    <property type="entry name" value="Mqo"/>
    <property type="match status" value="1"/>
</dbReference>
<dbReference type="SUPFAM" id="SSF51905">
    <property type="entry name" value="FAD/NAD(P)-binding domain"/>
    <property type="match status" value="1"/>
</dbReference>
<proteinExistence type="inferred from homology"/>